<accession>P05471</accession>
<proteinExistence type="predicted"/>
<comment type="function">
    <text>The presence of the two linear plasmids, termed pGKL1 and pGKL2, in strains of Kluyveromyces lactis confers the killer phenotype to the host cell, by promoting the secretion of a toxin able to inhibit the growth of sensitive strains.</text>
</comment>
<geneLocation type="plasmid">
    <name>pGKl-2</name>
</geneLocation>
<organism>
    <name type="scientific">Kluyveromyces lactis (strain ATCC 8585 / CBS 2359 / DSM 70799 / NBRC 1267 / NRRL Y-1140 / WM37)</name>
    <name type="common">Yeast</name>
    <name type="synonym">Candida sphaerica</name>
    <dbReference type="NCBI Taxonomy" id="284590"/>
    <lineage>
        <taxon>Eukaryota</taxon>
        <taxon>Fungi</taxon>
        <taxon>Dikarya</taxon>
        <taxon>Ascomycota</taxon>
        <taxon>Saccharomycotina</taxon>
        <taxon>Saccharomycetes</taxon>
        <taxon>Saccharomycetales</taxon>
        <taxon>Saccharomycetaceae</taxon>
        <taxon>Kluyveromyces</taxon>
    </lineage>
</organism>
<feature type="chain" id="PRO_0000066279" description="Uncharacterized killer plasmid pGKl-2 protein 5">
    <location>
        <begin position="1"/>
        <end position="158"/>
    </location>
</feature>
<reference key="1">
    <citation type="journal article" date="1988" name="Nucleic Acids Res.">
        <title>Genome organization of the killer plasmid pGKL2 from Kluyveromyces lactis.</title>
        <authorList>
            <person name="Tommasino M."/>
            <person name="Ricci S."/>
            <person name="Galeotti C.L."/>
        </authorList>
    </citation>
    <scope>NUCLEOTIDE SEQUENCE [GENOMIC DNA]</scope>
    <source>
        <strain>ATCC 8585 / CBS 2359 / DSM 70799 / NBRC 1267 / NRRL Y-1140 / WM37</strain>
    </source>
</reference>
<reference key="2">
    <citation type="journal article" date="1988" name="Nucleic Acids Res.">
        <title>Extranuclear gene expression in yeast: evidence for a plasmid-encoded RNA polymerase of unique structure.</title>
        <authorList>
            <person name="Wilson D.W."/>
            <person name="Meacock P.A."/>
        </authorList>
    </citation>
    <scope>NUCLEOTIDE SEQUENCE [GENOMIC DNA]</scope>
    <source>
        <strain>ATCC 8585 / CBS 2359 / DSM 70799 / NBRC 1267 / NRRL Y-1140 / WM37</strain>
    </source>
</reference>
<keyword id="KW-0614">Plasmid</keyword>
<name>YKP5_KLULA</name>
<sequence length="158" mass="18094">MIYDKIDTKLIKLGKTNKFSGEEEKSITSLYYEDESFEFSFKNKYVKITKIETNAYGKKFVTIKSKLYADIVEKVAKELDAVSPILSDGSFRATINDATSFSKDVGEYSFYACVSLYFPSIYKDTEKTTLQVYLKEVVVTKIIKNNLEVEFDKLSLAI</sequence>
<protein>
    <recommendedName>
        <fullName>Uncharacterized killer plasmid pGKl-2 protein 5</fullName>
    </recommendedName>
</protein>
<dbReference type="EMBL" id="X07776">
    <property type="protein sequence ID" value="CAA30606.1"/>
    <property type="molecule type" value="Genomic_DNA"/>
</dbReference>
<dbReference type="EMBL" id="X07946">
    <property type="protein sequence ID" value="CAA30771.1"/>
    <property type="molecule type" value="Genomic_DNA"/>
</dbReference>
<dbReference type="PIR" id="S00963">
    <property type="entry name" value="S00963"/>
</dbReference>
<dbReference type="PaxDb" id="284590-P05471"/>
<dbReference type="InParanoid" id="P05471"/>
<dbReference type="InterPro" id="IPR035145">
    <property type="entry name" value="DUF5482"/>
</dbReference>
<dbReference type="Pfam" id="PF17579">
    <property type="entry name" value="DUF5482"/>
    <property type="match status" value="1"/>
</dbReference>